<organism>
    <name type="scientific">Helicobacter acinonychis (strain Sheeba)</name>
    <dbReference type="NCBI Taxonomy" id="382638"/>
    <lineage>
        <taxon>Bacteria</taxon>
        <taxon>Pseudomonadati</taxon>
        <taxon>Campylobacterota</taxon>
        <taxon>Epsilonproteobacteria</taxon>
        <taxon>Campylobacterales</taxon>
        <taxon>Helicobacteraceae</taxon>
        <taxon>Helicobacter</taxon>
    </lineage>
</organism>
<reference key="1">
    <citation type="journal article" date="2006" name="PLoS Genet.">
        <title>Who ate whom? Adaptive Helicobacter genomic changes that accompanied a host jump from early humans to large felines.</title>
        <authorList>
            <person name="Eppinger M."/>
            <person name="Baar C."/>
            <person name="Linz B."/>
            <person name="Raddatz G."/>
            <person name="Lanz C."/>
            <person name="Keller H."/>
            <person name="Morelli G."/>
            <person name="Gressmann H."/>
            <person name="Achtman M."/>
            <person name="Schuster S.C."/>
        </authorList>
    </citation>
    <scope>NUCLEOTIDE SEQUENCE [LARGE SCALE GENOMIC DNA]</scope>
    <source>
        <strain>Sheeba</strain>
    </source>
</reference>
<sequence>MGSIGSIGKPIEGFLVAAIQFPVPIVNSKKDIENNVQSIIRTLHATKAGYPGVELIIFPEYSTQGLNTAKWLSEEFLLDVGGKETEAYAQACKEAKVYGVFSIMERNPDPNKNPYNTAIIINPKGEIILHYRKLFPWNPIEPWYPGDKGMPVCDGPGGSKLAVCICHDGMIPELAREAAYKGCNVYIRISGYSTQVNDQWILTNRSNAWHNLMYTVSVNLAGYDNVFYYFGEGQICNFDGTTLVQGHRNPWEIVTGEIYPKMADNARLSWGLENNIYNLGHRGYVAKPGGEPDAGLTYIKDLAASKYKLPWEDHMQIKDGSIYGYPTSGGRFGK</sequence>
<feature type="chain" id="PRO_1000067060" description="Formamidase">
    <location>
        <begin position="1"/>
        <end position="334"/>
    </location>
</feature>
<feature type="domain" description="CN hydrolase" evidence="2">
    <location>
        <begin position="14"/>
        <end position="260"/>
    </location>
</feature>
<feature type="active site" description="Proton acceptor" evidence="1">
    <location>
        <position position="60"/>
    </location>
</feature>
<feature type="active site" description="Proton donor" evidence="1">
    <location>
        <position position="133"/>
    </location>
</feature>
<feature type="active site" description="Nucleophile" evidence="1">
    <location>
        <position position="166"/>
    </location>
</feature>
<dbReference type="EC" id="3.5.1.49" evidence="1"/>
<dbReference type="EMBL" id="AM260522">
    <property type="protein sequence ID" value="CAJ99843.1"/>
    <property type="molecule type" value="Genomic_DNA"/>
</dbReference>
<dbReference type="RefSeq" id="WP_011577952.1">
    <property type="nucleotide sequence ID" value="NC_008229.1"/>
</dbReference>
<dbReference type="SMR" id="Q17WY3"/>
<dbReference type="STRING" id="382638.Hac_1079"/>
<dbReference type="GeneID" id="31758440"/>
<dbReference type="KEGG" id="hac:Hac_1079"/>
<dbReference type="eggNOG" id="COG0388">
    <property type="taxonomic scope" value="Bacteria"/>
</dbReference>
<dbReference type="HOGENOM" id="CLU_071797_0_0_7"/>
<dbReference type="OrthoDB" id="9811121at2"/>
<dbReference type="BioCyc" id="HACI382638:HAC_RS04625-MONOMER"/>
<dbReference type="Proteomes" id="UP000000775">
    <property type="component" value="Chromosome"/>
</dbReference>
<dbReference type="GO" id="GO:0004328">
    <property type="term" value="F:formamidase activity"/>
    <property type="evidence" value="ECO:0007669"/>
    <property type="project" value="UniProtKB-UniRule"/>
</dbReference>
<dbReference type="GO" id="GO:0050126">
    <property type="term" value="F:N-carbamoylputrescine amidase activity"/>
    <property type="evidence" value="ECO:0007669"/>
    <property type="project" value="TreeGrafter"/>
</dbReference>
<dbReference type="GO" id="GO:0033388">
    <property type="term" value="P:putrescine biosynthetic process from arginine"/>
    <property type="evidence" value="ECO:0007669"/>
    <property type="project" value="TreeGrafter"/>
</dbReference>
<dbReference type="CDD" id="cd07565">
    <property type="entry name" value="aliphatic_amidase"/>
    <property type="match status" value="1"/>
</dbReference>
<dbReference type="Gene3D" id="3.60.110.10">
    <property type="entry name" value="Carbon-nitrogen hydrolase"/>
    <property type="match status" value="1"/>
</dbReference>
<dbReference type="HAMAP" id="MF_01243">
    <property type="entry name" value="Formamidase"/>
    <property type="match status" value="1"/>
</dbReference>
<dbReference type="InterPro" id="IPR050345">
    <property type="entry name" value="Aliph_Amidase/BUP"/>
</dbReference>
<dbReference type="InterPro" id="IPR003010">
    <property type="entry name" value="C-N_Hydrolase"/>
</dbReference>
<dbReference type="InterPro" id="IPR036526">
    <property type="entry name" value="C-N_Hydrolase_sf"/>
</dbReference>
<dbReference type="InterPro" id="IPR022843">
    <property type="entry name" value="Formamidase"/>
</dbReference>
<dbReference type="NCBIfam" id="NF009803">
    <property type="entry name" value="PRK13287.1"/>
    <property type="match status" value="1"/>
</dbReference>
<dbReference type="PANTHER" id="PTHR43674:SF15">
    <property type="entry name" value="FORMAMIDASE"/>
    <property type="match status" value="1"/>
</dbReference>
<dbReference type="PANTHER" id="PTHR43674">
    <property type="entry name" value="NITRILASE C965.09-RELATED"/>
    <property type="match status" value="1"/>
</dbReference>
<dbReference type="Pfam" id="PF00795">
    <property type="entry name" value="CN_hydrolase"/>
    <property type="match status" value="1"/>
</dbReference>
<dbReference type="SUPFAM" id="SSF56317">
    <property type="entry name" value="Carbon-nitrogen hydrolase"/>
    <property type="match status" value="1"/>
</dbReference>
<dbReference type="PROSITE" id="PS50263">
    <property type="entry name" value="CN_HYDROLASE"/>
    <property type="match status" value="1"/>
</dbReference>
<evidence type="ECO:0000255" key="1">
    <source>
        <dbReference type="HAMAP-Rule" id="MF_01243"/>
    </source>
</evidence>
<evidence type="ECO:0000255" key="2">
    <source>
        <dbReference type="PROSITE-ProRule" id="PRU00054"/>
    </source>
</evidence>
<proteinExistence type="inferred from homology"/>
<gene>
    <name evidence="1" type="primary">amiF</name>
    <name type="ordered locus">Hac_1079</name>
</gene>
<keyword id="KW-0378">Hydrolase</keyword>
<protein>
    <recommendedName>
        <fullName evidence="1">Formamidase</fullName>
        <ecNumber evidence="1">3.5.1.49</ecNumber>
    </recommendedName>
    <alternativeName>
        <fullName evidence="1">Formamide amidohydrolase</fullName>
    </alternativeName>
</protein>
<comment type="function">
    <text evidence="1">Is an aliphatic amidase with a restricted substrate specificity, as it only hydrolyzes formamide.</text>
</comment>
<comment type="catalytic activity">
    <reaction evidence="1">
        <text>formamide + H2O = formate + NH4(+)</text>
        <dbReference type="Rhea" id="RHEA:21948"/>
        <dbReference type="ChEBI" id="CHEBI:15377"/>
        <dbReference type="ChEBI" id="CHEBI:15740"/>
        <dbReference type="ChEBI" id="CHEBI:16397"/>
        <dbReference type="ChEBI" id="CHEBI:28938"/>
        <dbReference type="EC" id="3.5.1.49"/>
    </reaction>
</comment>
<comment type="similarity">
    <text evidence="1">Belongs to the carbon-nitrogen hydrolase superfamily. Aliphatic amidase family.</text>
</comment>
<accession>Q17WY3</accession>
<name>AMIF_HELAH</name>